<reference key="1">
    <citation type="journal article" date="2006" name="Comp. Biochem. Physiol.">
        <title>Diversity of long-chain toxins in Tityus zulianus and Tityus discrepans venoms (Scorpiones, Buthidae): molecular, immunological, and mass spectral analyses.</title>
        <authorList>
            <person name="Borges A."/>
            <person name="Garcia C.C."/>
            <person name="Lugo E."/>
            <person name="Alfonzo M.J."/>
            <person name="Jowers M.J."/>
            <person name="Op den Camp H.J.M."/>
        </authorList>
    </citation>
    <scope>NUCLEOTIDE SEQUENCE [MRNA]</scope>
    <scope>MASS SPECTROMETRY</scope>
    <source>
        <tissue>Venom</tissue>
        <tissue>Venom gland</tissue>
    </source>
</reference>
<reference key="2">
    <citation type="journal article" date="2012" name="PLoS ONE">
        <title>Identification and phylogenetic analysis of Tityus pachyurus and Tityus obscurus novel putative Na+-channel scorpion toxins.</title>
        <authorList>
            <person name="Guerrero-Vargas J.A."/>
            <person name="Mourao C.B."/>
            <person name="Quintero-Hernandez V."/>
            <person name="Possani L.D."/>
            <person name="Schwartz E.F."/>
        </authorList>
    </citation>
    <scope>NOMENCLATURE</scope>
</reference>
<name>SCX4_TITDI</name>
<comment type="function">
    <text evidence="1">Beta toxins bind voltage-independently at site-4 of sodium channels (Nav) and shift the voltage of activation toward more negative potentials thereby affecting sodium channel activation and promoting spontaneous and repetitive firing.</text>
</comment>
<comment type="subcellular location">
    <subcellularLocation>
        <location>Secreted</location>
    </subcellularLocation>
</comment>
<comment type="tissue specificity">
    <text>Expressed by the venom gland.</text>
</comment>
<comment type="domain">
    <text evidence="4">Has the structural arrangement of an alpha-helix connected to antiparallel beta-sheets by disulfide bonds (CS-alpha/beta).</text>
</comment>
<comment type="mass spectrometry"/>
<comment type="miscellaneous">
    <text evidence="1">Negative results: does not affect the cardiac Nav1.5/SCN5A, the peripheral nerve channel Nav1.7/SCN9A, and the voltage-dependent potassium channel Kv1.5/KCNA5.</text>
</comment>
<comment type="similarity">
    <text evidence="4">Belongs to the long (4 C-C) scorpion toxin superfamily. Sodium channel inhibitor family. Beta subfamily.</text>
</comment>
<dbReference type="EMBL" id="DQ075232">
    <property type="protein sequence ID" value="AAZ29711.1"/>
    <property type="molecule type" value="mRNA"/>
</dbReference>
<dbReference type="EMBL" id="DQ075231">
    <property type="protein sequence ID" value="AAZ29710.1"/>
    <property type="molecule type" value="mRNA"/>
</dbReference>
<dbReference type="SMR" id="Q1I174"/>
<dbReference type="GO" id="GO:0005576">
    <property type="term" value="C:extracellular region"/>
    <property type="evidence" value="ECO:0007669"/>
    <property type="project" value="UniProtKB-SubCell"/>
</dbReference>
<dbReference type="GO" id="GO:0019871">
    <property type="term" value="F:sodium channel inhibitor activity"/>
    <property type="evidence" value="ECO:0007669"/>
    <property type="project" value="InterPro"/>
</dbReference>
<dbReference type="GO" id="GO:0090729">
    <property type="term" value="F:toxin activity"/>
    <property type="evidence" value="ECO:0007669"/>
    <property type="project" value="UniProtKB-KW"/>
</dbReference>
<dbReference type="GO" id="GO:0006952">
    <property type="term" value="P:defense response"/>
    <property type="evidence" value="ECO:0007669"/>
    <property type="project" value="InterPro"/>
</dbReference>
<dbReference type="CDD" id="cd23106">
    <property type="entry name" value="neurotoxins_LC_scorpion"/>
    <property type="match status" value="1"/>
</dbReference>
<dbReference type="FunFam" id="3.30.30.10:FF:000002">
    <property type="entry name" value="Alpha-like toxin BmK-M1"/>
    <property type="match status" value="1"/>
</dbReference>
<dbReference type="Gene3D" id="3.30.30.10">
    <property type="entry name" value="Knottin, scorpion toxin-like"/>
    <property type="match status" value="1"/>
</dbReference>
<dbReference type="InterPro" id="IPR044062">
    <property type="entry name" value="LCN-type_CS_alpha_beta_dom"/>
</dbReference>
<dbReference type="InterPro" id="IPR003614">
    <property type="entry name" value="Scorpion_toxin-like"/>
</dbReference>
<dbReference type="InterPro" id="IPR036574">
    <property type="entry name" value="Scorpion_toxin-like_sf"/>
</dbReference>
<dbReference type="InterPro" id="IPR018218">
    <property type="entry name" value="Scorpion_toxinL"/>
</dbReference>
<dbReference type="InterPro" id="IPR002061">
    <property type="entry name" value="Scorpion_toxinL/defensin"/>
</dbReference>
<dbReference type="Pfam" id="PF00537">
    <property type="entry name" value="Toxin_3"/>
    <property type="match status" value="1"/>
</dbReference>
<dbReference type="PRINTS" id="PR00285">
    <property type="entry name" value="SCORPNTOXIN"/>
</dbReference>
<dbReference type="SMART" id="SM00505">
    <property type="entry name" value="Knot1"/>
    <property type="match status" value="1"/>
</dbReference>
<dbReference type="SUPFAM" id="SSF57095">
    <property type="entry name" value="Scorpion toxin-like"/>
    <property type="match status" value="1"/>
</dbReference>
<dbReference type="PROSITE" id="PS51863">
    <property type="entry name" value="LCN_CSAB"/>
    <property type="match status" value="1"/>
</dbReference>
<keyword id="KW-0027">Amidation</keyword>
<keyword id="KW-1015">Disulfide bond</keyword>
<keyword id="KW-0872">Ion channel impairing toxin</keyword>
<keyword id="KW-0528">Neurotoxin</keyword>
<keyword id="KW-0964">Secreted</keyword>
<keyword id="KW-0732">Signal</keyword>
<keyword id="KW-0800">Toxin</keyword>
<keyword id="KW-0738">Voltage-gated sodium channel impairing toxin</keyword>
<proteinExistence type="evidence at protein level"/>
<accession>Q1I174</accession>
<organism>
    <name type="scientific">Tityus discrepans</name>
    <name type="common">Venezuelan scorpion</name>
    <dbReference type="NCBI Taxonomy" id="57059"/>
    <lineage>
        <taxon>Eukaryota</taxon>
        <taxon>Metazoa</taxon>
        <taxon>Ecdysozoa</taxon>
        <taxon>Arthropoda</taxon>
        <taxon>Chelicerata</taxon>
        <taxon>Arachnida</taxon>
        <taxon>Scorpiones</taxon>
        <taxon>Buthida</taxon>
        <taxon>Buthoidea</taxon>
        <taxon>Buthidae</taxon>
        <taxon>Tityus</taxon>
    </lineage>
</organism>
<feature type="signal peptide" evidence="1">
    <location>
        <begin position="1" status="less than"/>
        <end position="7"/>
    </location>
</feature>
<feature type="chain" id="PRO_0000253767" description="Toxin Td4">
    <location>
        <begin position="8"/>
        <end position="71"/>
    </location>
</feature>
<feature type="domain" description="LCN-type CS-alpha/beta" evidence="2">
    <location>
        <begin position="8"/>
        <end position="70"/>
    </location>
</feature>
<feature type="modified residue" description="Arginine amide" evidence="1">
    <location>
        <position position="71"/>
    </location>
</feature>
<feature type="disulfide bond" evidence="2">
    <location>
        <begin position="18"/>
        <end position="69"/>
    </location>
</feature>
<feature type="disulfide bond" evidence="2">
    <location>
        <begin position="22"/>
        <end position="44"/>
    </location>
</feature>
<feature type="disulfide bond" evidence="2">
    <location>
        <begin position="30"/>
        <end position="50"/>
    </location>
</feature>
<feature type="disulfide bond" evidence="2">
    <location>
        <begin position="34"/>
        <end position="52"/>
    </location>
</feature>
<feature type="non-terminal residue">
    <location>
        <position position="1"/>
    </location>
</feature>
<protein>
    <recommendedName>
        <fullName>Toxin Td4</fullName>
    </recommendedName>
    <alternativeName>
        <fullName>P*T-beta* NaTx14.3</fullName>
    </alternativeName>
</protein>
<evidence type="ECO:0000250" key="1"/>
<evidence type="ECO:0000255" key="2">
    <source>
        <dbReference type="PROSITE-ProRule" id="PRU01210"/>
    </source>
</evidence>
<evidence type="ECO:0000269" key="3">
    <source>
    </source>
</evidence>
<evidence type="ECO:0000305" key="4"/>
<sequence>IGMVVECKDGYLVGNDGCKYSCFTRPGTYCANECSRVKGKDGYCYAWMACYCYSMPNWVKTWDRATNRCGRGK</sequence>